<proteinExistence type="inferred from homology"/>
<name>POL_SIVTN</name>
<evidence type="ECO:0000250" key="1"/>
<evidence type="ECO:0000250" key="2">
    <source>
        <dbReference type="UniProtKB" id="P03366"/>
    </source>
</evidence>
<evidence type="ECO:0000250" key="3">
    <source>
        <dbReference type="UniProtKB" id="P03367"/>
    </source>
</evidence>
<evidence type="ECO:0000250" key="4">
    <source>
        <dbReference type="UniProtKB" id="P04585"/>
    </source>
</evidence>
<evidence type="ECO:0000250" key="5">
    <source>
        <dbReference type="UniProtKB" id="P04591"/>
    </source>
</evidence>
<evidence type="ECO:0000250" key="6">
    <source>
        <dbReference type="UniProtKB" id="P12493"/>
    </source>
</evidence>
<evidence type="ECO:0000250" key="7">
    <source>
        <dbReference type="UniProtKB" id="P12497"/>
    </source>
</evidence>
<evidence type="ECO:0000255" key="8"/>
<evidence type="ECO:0000255" key="9">
    <source>
        <dbReference type="PROSITE-ProRule" id="PRU00047"/>
    </source>
</evidence>
<evidence type="ECO:0000255" key="10">
    <source>
        <dbReference type="PROSITE-ProRule" id="PRU00275"/>
    </source>
</evidence>
<evidence type="ECO:0000255" key="11">
    <source>
        <dbReference type="PROSITE-ProRule" id="PRU00405"/>
    </source>
</evidence>
<evidence type="ECO:0000255" key="12">
    <source>
        <dbReference type="PROSITE-ProRule" id="PRU00408"/>
    </source>
</evidence>
<evidence type="ECO:0000255" key="13">
    <source>
        <dbReference type="PROSITE-ProRule" id="PRU00450"/>
    </source>
</evidence>
<evidence type="ECO:0000255" key="14">
    <source>
        <dbReference type="PROSITE-ProRule" id="PRU00457"/>
    </source>
</evidence>
<evidence type="ECO:0000255" key="15">
    <source>
        <dbReference type="PROSITE-ProRule" id="PRU00506"/>
    </source>
</evidence>
<evidence type="ECO:0000255" key="16">
    <source>
        <dbReference type="PROSITE-ProRule" id="PRU10094"/>
    </source>
</evidence>
<evidence type="ECO:0000256" key="17">
    <source>
        <dbReference type="SAM" id="MobiDB-lite"/>
    </source>
</evidence>
<evidence type="ECO:0000305" key="18"/>
<dbReference type="EC" id="3.4.23.16"/>
<dbReference type="EC" id="2.7.7.49"/>
<dbReference type="EC" id="2.7.7.7"/>
<dbReference type="EC" id="3.1.26.13"/>
<dbReference type="EC" id="3.1.13.2"/>
<dbReference type="EC" id="2.7.7.-" evidence="4"/>
<dbReference type="EC" id="3.1.-.-" evidence="4"/>
<dbReference type="EMBL" id="AF447763">
    <property type="protein sequence ID" value="AAO13960.1"/>
    <property type="status" value="ALT_SEQ"/>
    <property type="molecule type" value="Genomic_RNA"/>
</dbReference>
<dbReference type="SMR" id="Q8AII1"/>
<dbReference type="PRO" id="PR:Q8AII1"/>
<dbReference type="Proteomes" id="UP000007222">
    <property type="component" value="Segment"/>
</dbReference>
<dbReference type="GO" id="GO:0043657">
    <property type="term" value="C:host cell"/>
    <property type="evidence" value="ECO:0007669"/>
    <property type="project" value="GOC"/>
</dbReference>
<dbReference type="GO" id="GO:0030430">
    <property type="term" value="C:host cell cytoplasm"/>
    <property type="evidence" value="ECO:0007669"/>
    <property type="project" value="UniProtKB-SubCell"/>
</dbReference>
<dbReference type="GO" id="GO:0042025">
    <property type="term" value="C:host cell nucleus"/>
    <property type="evidence" value="ECO:0007669"/>
    <property type="project" value="UniProtKB-SubCell"/>
</dbReference>
<dbReference type="GO" id="GO:0020002">
    <property type="term" value="C:host cell plasma membrane"/>
    <property type="evidence" value="ECO:0007669"/>
    <property type="project" value="UniProtKB-SubCell"/>
</dbReference>
<dbReference type="GO" id="GO:0016020">
    <property type="term" value="C:membrane"/>
    <property type="evidence" value="ECO:0007669"/>
    <property type="project" value="UniProtKB-KW"/>
</dbReference>
<dbReference type="GO" id="GO:0019013">
    <property type="term" value="C:viral nucleocapsid"/>
    <property type="evidence" value="ECO:0007669"/>
    <property type="project" value="UniProtKB-KW"/>
</dbReference>
<dbReference type="GO" id="GO:0004190">
    <property type="term" value="F:aspartic-type endopeptidase activity"/>
    <property type="evidence" value="ECO:0007669"/>
    <property type="project" value="UniProtKB-KW"/>
</dbReference>
<dbReference type="GO" id="GO:0003677">
    <property type="term" value="F:DNA binding"/>
    <property type="evidence" value="ECO:0007669"/>
    <property type="project" value="UniProtKB-KW"/>
</dbReference>
<dbReference type="GO" id="GO:0003887">
    <property type="term" value="F:DNA-directed DNA polymerase activity"/>
    <property type="evidence" value="ECO:0007669"/>
    <property type="project" value="UniProtKB-KW"/>
</dbReference>
<dbReference type="GO" id="GO:0004533">
    <property type="term" value="F:exoribonuclease H activity"/>
    <property type="evidence" value="ECO:0007669"/>
    <property type="project" value="UniProtKB-EC"/>
</dbReference>
<dbReference type="GO" id="GO:0035613">
    <property type="term" value="F:RNA stem-loop binding"/>
    <property type="evidence" value="ECO:0007669"/>
    <property type="project" value="TreeGrafter"/>
</dbReference>
<dbReference type="GO" id="GO:0003964">
    <property type="term" value="F:RNA-directed DNA polymerase activity"/>
    <property type="evidence" value="ECO:0007669"/>
    <property type="project" value="UniProtKB-KW"/>
</dbReference>
<dbReference type="GO" id="GO:0004523">
    <property type="term" value="F:RNA-DNA hybrid ribonuclease activity"/>
    <property type="evidence" value="ECO:0007669"/>
    <property type="project" value="InterPro"/>
</dbReference>
<dbReference type="GO" id="GO:0005198">
    <property type="term" value="F:structural molecule activity"/>
    <property type="evidence" value="ECO:0007669"/>
    <property type="project" value="InterPro"/>
</dbReference>
<dbReference type="GO" id="GO:0008270">
    <property type="term" value="F:zinc ion binding"/>
    <property type="evidence" value="ECO:0007669"/>
    <property type="project" value="UniProtKB-KW"/>
</dbReference>
<dbReference type="GO" id="GO:0015074">
    <property type="term" value="P:DNA integration"/>
    <property type="evidence" value="ECO:0007669"/>
    <property type="project" value="UniProtKB-KW"/>
</dbReference>
<dbReference type="GO" id="GO:0006310">
    <property type="term" value="P:DNA recombination"/>
    <property type="evidence" value="ECO:0007669"/>
    <property type="project" value="UniProtKB-KW"/>
</dbReference>
<dbReference type="GO" id="GO:0075713">
    <property type="term" value="P:establishment of integrated proviral latency"/>
    <property type="evidence" value="ECO:0007669"/>
    <property type="project" value="UniProtKB-KW"/>
</dbReference>
<dbReference type="GO" id="GO:0006508">
    <property type="term" value="P:proteolysis"/>
    <property type="evidence" value="ECO:0007669"/>
    <property type="project" value="UniProtKB-KW"/>
</dbReference>
<dbReference type="GO" id="GO:0046718">
    <property type="term" value="P:symbiont entry into host cell"/>
    <property type="evidence" value="ECO:0007669"/>
    <property type="project" value="UniProtKB-KW"/>
</dbReference>
<dbReference type="GO" id="GO:0039657">
    <property type="term" value="P:symbiont-mediated suppression of host gene expression"/>
    <property type="evidence" value="ECO:0007669"/>
    <property type="project" value="UniProtKB-KW"/>
</dbReference>
<dbReference type="GO" id="GO:0044826">
    <property type="term" value="P:viral genome integration into host DNA"/>
    <property type="evidence" value="ECO:0007669"/>
    <property type="project" value="UniProtKB-KW"/>
</dbReference>
<dbReference type="GO" id="GO:0075732">
    <property type="term" value="P:viral penetration into host nucleus"/>
    <property type="evidence" value="ECO:0007669"/>
    <property type="project" value="UniProtKB-KW"/>
</dbReference>
<dbReference type="GO" id="GO:0075523">
    <property type="term" value="P:viral translational frameshifting"/>
    <property type="evidence" value="ECO:0007669"/>
    <property type="project" value="UniProtKB-KW"/>
</dbReference>
<dbReference type="CDD" id="cd05482">
    <property type="entry name" value="HIV_retropepsin_like"/>
    <property type="match status" value="1"/>
</dbReference>
<dbReference type="FunFam" id="3.30.70.270:FF:000006">
    <property type="entry name" value="Gag-Pol polyprotein"/>
    <property type="match status" value="1"/>
</dbReference>
<dbReference type="Gene3D" id="1.10.10.200">
    <property type="match status" value="1"/>
</dbReference>
<dbReference type="Gene3D" id="1.10.1200.30">
    <property type="match status" value="1"/>
</dbReference>
<dbReference type="Gene3D" id="3.30.70.270">
    <property type="match status" value="3"/>
</dbReference>
<dbReference type="Gene3D" id="2.40.70.10">
    <property type="entry name" value="Acid Proteases"/>
    <property type="match status" value="1"/>
</dbReference>
<dbReference type="Gene3D" id="3.10.10.10">
    <property type="entry name" value="HIV Type 1 Reverse Transcriptase, subunit A, domain 1"/>
    <property type="match status" value="1"/>
</dbReference>
<dbReference type="Gene3D" id="1.10.375.10">
    <property type="entry name" value="Human Immunodeficiency Virus Type 1 Capsid Protein"/>
    <property type="match status" value="1"/>
</dbReference>
<dbReference type="Gene3D" id="1.10.150.90">
    <property type="entry name" value="Immunodeficiency lentiviruses, gag gene matrix protein p17"/>
    <property type="match status" value="1"/>
</dbReference>
<dbReference type="Gene3D" id="2.30.30.10">
    <property type="entry name" value="Integrase, C-terminal domain superfamily, retroviral"/>
    <property type="match status" value="1"/>
</dbReference>
<dbReference type="Gene3D" id="3.30.420.10">
    <property type="entry name" value="Ribonuclease H-like superfamily/Ribonuclease H"/>
    <property type="match status" value="2"/>
</dbReference>
<dbReference type="Gene3D" id="1.20.5.760">
    <property type="entry name" value="Single helix bin"/>
    <property type="match status" value="1"/>
</dbReference>
<dbReference type="Gene3D" id="4.10.60.10">
    <property type="entry name" value="Zinc finger, CCHC-type"/>
    <property type="match status" value="1"/>
</dbReference>
<dbReference type="InterPro" id="IPR001969">
    <property type="entry name" value="Aspartic_peptidase_AS"/>
</dbReference>
<dbReference type="InterPro" id="IPR043502">
    <property type="entry name" value="DNA/RNA_pol_sf"/>
</dbReference>
<dbReference type="InterPro" id="IPR045345">
    <property type="entry name" value="Gag_p24_C"/>
</dbReference>
<dbReference type="InterPro" id="IPR017856">
    <property type="entry name" value="Integrase-like_N"/>
</dbReference>
<dbReference type="InterPro" id="IPR036862">
    <property type="entry name" value="Integrase_C_dom_sf_retrovir"/>
</dbReference>
<dbReference type="InterPro" id="IPR001037">
    <property type="entry name" value="Integrase_C_retrovir"/>
</dbReference>
<dbReference type="InterPro" id="IPR001584">
    <property type="entry name" value="Integrase_cat-core"/>
</dbReference>
<dbReference type="InterPro" id="IPR003308">
    <property type="entry name" value="Integrase_Zn-bd_dom_N"/>
</dbReference>
<dbReference type="InterPro" id="IPR000071">
    <property type="entry name" value="Lentvrl_matrix_N"/>
</dbReference>
<dbReference type="InterPro" id="IPR012344">
    <property type="entry name" value="Matrix_HIV/RSV_N"/>
</dbReference>
<dbReference type="InterPro" id="IPR001995">
    <property type="entry name" value="Peptidase_A2_cat"/>
</dbReference>
<dbReference type="InterPro" id="IPR021109">
    <property type="entry name" value="Peptidase_aspartic_dom_sf"/>
</dbReference>
<dbReference type="InterPro" id="IPR034170">
    <property type="entry name" value="Retropepsin-like_cat_dom"/>
</dbReference>
<dbReference type="InterPro" id="IPR018061">
    <property type="entry name" value="Retropepsins"/>
</dbReference>
<dbReference type="InterPro" id="IPR008916">
    <property type="entry name" value="Retrov_capsid_C"/>
</dbReference>
<dbReference type="InterPro" id="IPR008919">
    <property type="entry name" value="Retrov_capsid_N"/>
</dbReference>
<dbReference type="InterPro" id="IPR010999">
    <property type="entry name" value="Retrovr_matrix"/>
</dbReference>
<dbReference type="InterPro" id="IPR043128">
    <property type="entry name" value="Rev_trsase/Diguanyl_cyclase"/>
</dbReference>
<dbReference type="InterPro" id="IPR012337">
    <property type="entry name" value="RNaseH-like_sf"/>
</dbReference>
<dbReference type="InterPro" id="IPR002156">
    <property type="entry name" value="RNaseH_domain"/>
</dbReference>
<dbReference type="InterPro" id="IPR036397">
    <property type="entry name" value="RNaseH_sf"/>
</dbReference>
<dbReference type="InterPro" id="IPR000477">
    <property type="entry name" value="RT_dom"/>
</dbReference>
<dbReference type="InterPro" id="IPR010659">
    <property type="entry name" value="RVT_connect"/>
</dbReference>
<dbReference type="InterPro" id="IPR010661">
    <property type="entry name" value="RVT_thumb"/>
</dbReference>
<dbReference type="InterPro" id="IPR001878">
    <property type="entry name" value="Znf_CCHC"/>
</dbReference>
<dbReference type="InterPro" id="IPR036875">
    <property type="entry name" value="Znf_CCHC_sf"/>
</dbReference>
<dbReference type="PANTHER" id="PTHR41694">
    <property type="entry name" value="ENDOGENOUS RETROVIRUS GROUP K MEMBER POL PROTEIN"/>
    <property type="match status" value="1"/>
</dbReference>
<dbReference type="PANTHER" id="PTHR41694:SF3">
    <property type="entry name" value="RNA-DIRECTED DNA POLYMERASE-RELATED"/>
    <property type="match status" value="1"/>
</dbReference>
<dbReference type="Pfam" id="PF00540">
    <property type="entry name" value="Gag_p17"/>
    <property type="match status" value="1"/>
</dbReference>
<dbReference type="Pfam" id="PF00607">
    <property type="entry name" value="Gag_p24"/>
    <property type="match status" value="1"/>
</dbReference>
<dbReference type="Pfam" id="PF19317">
    <property type="entry name" value="Gag_p24_C"/>
    <property type="match status" value="1"/>
</dbReference>
<dbReference type="Pfam" id="PF00552">
    <property type="entry name" value="IN_DBD_C"/>
    <property type="match status" value="1"/>
</dbReference>
<dbReference type="Pfam" id="PF02022">
    <property type="entry name" value="Integrase_Zn"/>
    <property type="match status" value="1"/>
</dbReference>
<dbReference type="Pfam" id="PF00075">
    <property type="entry name" value="RNase_H"/>
    <property type="match status" value="1"/>
</dbReference>
<dbReference type="Pfam" id="PF00665">
    <property type="entry name" value="rve"/>
    <property type="match status" value="1"/>
</dbReference>
<dbReference type="Pfam" id="PF00077">
    <property type="entry name" value="RVP"/>
    <property type="match status" value="1"/>
</dbReference>
<dbReference type="Pfam" id="PF00078">
    <property type="entry name" value="RVT_1"/>
    <property type="match status" value="1"/>
</dbReference>
<dbReference type="Pfam" id="PF06815">
    <property type="entry name" value="RVT_connect"/>
    <property type="match status" value="1"/>
</dbReference>
<dbReference type="Pfam" id="PF06817">
    <property type="entry name" value="RVT_thumb"/>
    <property type="match status" value="1"/>
</dbReference>
<dbReference type="Pfam" id="PF00098">
    <property type="entry name" value="zf-CCHC"/>
    <property type="match status" value="2"/>
</dbReference>
<dbReference type="PRINTS" id="PR00234">
    <property type="entry name" value="HIV1MATRIX"/>
</dbReference>
<dbReference type="SMART" id="SM00343">
    <property type="entry name" value="ZnF_C2HC"/>
    <property type="match status" value="2"/>
</dbReference>
<dbReference type="SUPFAM" id="SSF50630">
    <property type="entry name" value="Acid proteases"/>
    <property type="match status" value="1"/>
</dbReference>
<dbReference type="SUPFAM" id="SSF50122">
    <property type="entry name" value="DNA-binding domain of retroviral integrase"/>
    <property type="match status" value="1"/>
</dbReference>
<dbReference type="SUPFAM" id="SSF56672">
    <property type="entry name" value="DNA/RNA polymerases"/>
    <property type="match status" value="1"/>
</dbReference>
<dbReference type="SUPFAM" id="SSF46919">
    <property type="entry name" value="N-terminal Zn binding domain of HIV integrase"/>
    <property type="match status" value="1"/>
</dbReference>
<dbReference type="SUPFAM" id="SSF47836">
    <property type="entry name" value="Retroviral matrix proteins"/>
    <property type="match status" value="1"/>
</dbReference>
<dbReference type="SUPFAM" id="SSF47353">
    <property type="entry name" value="Retrovirus capsid dimerization domain-like"/>
    <property type="match status" value="1"/>
</dbReference>
<dbReference type="SUPFAM" id="SSF47943">
    <property type="entry name" value="Retrovirus capsid protein, N-terminal core domain"/>
    <property type="match status" value="1"/>
</dbReference>
<dbReference type="SUPFAM" id="SSF57756">
    <property type="entry name" value="Retrovirus zinc finger-like domains"/>
    <property type="match status" value="1"/>
</dbReference>
<dbReference type="SUPFAM" id="SSF53098">
    <property type="entry name" value="Ribonuclease H-like"/>
    <property type="match status" value="2"/>
</dbReference>
<dbReference type="PROSITE" id="PS50175">
    <property type="entry name" value="ASP_PROT_RETROV"/>
    <property type="match status" value="1"/>
</dbReference>
<dbReference type="PROSITE" id="PS00141">
    <property type="entry name" value="ASP_PROTEASE"/>
    <property type="match status" value="1"/>
</dbReference>
<dbReference type="PROSITE" id="PS50994">
    <property type="entry name" value="INTEGRASE"/>
    <property type="match status" value="1"/>
</dbReference>
<dbReference type="PROSITE" id="PS51027">
    <property type="entry name" value="INTEGRASE_DBD"/>
    <property type="match status" value="1"/>
</dbReference>
<dbReference type="PROSITE" id="PS50879">
    <property type="entry name" value="RNASE_H_1"/>
    <property type="match status" value="1"/>
</dbReference>
<dbReference type="PROSITE" id="PS50878">
    <property type="entry name" value="RT_POL"/>
    <property type="match status" value="1"/>
</dbReference>
<dbReference type="PROSITE" id="PS50158">
    <property type="entry name" value="ZF_CCHC"/>
    <property type="match status" value="2"/>
</dbReference>
<dbReference type="PROSITE" id="PS50876">
    <property type="entry name" value="ZF_INTEGRASE"/>
    <property type="match status" value="1"/>
</dbReference>
<sequence>MGARASVLRGDKLDTWESIRLKSRGRKKYLIKHLVWAGSELQRFAMNPGLMENVEGCWKIILQLQPSVDIGSPEIISLFNTICVLYCVHAGERVQDTEEAVKIVKMKLTVQKNNSTATSSGQRQNAGEKEETVPPSGNTGNTGRATETPSGSRLYPVITDAQGVARHQPISPRTLNAWVRVIEEKGFNPEVIPMFSALSEGATPYDLNSMLNAVGEHQAAMQMLKEVINEEAAEWDRAHPAHAGPQQAGMLREPTGADIAGTTSTLQEQVLWMTTPQAQGGVPVGDIYKRWIILGLNKLVRMYSPVSILDIKQGPKEPFRDYVDRFYKTIRAEQASQPVKTWMTETLLVQNANPDCKHILKALGQGATLEEMLTACQGVGGPSHKAKILAEAMASATAGGVNMLQGGKRPPLKKGQLQCFNCGKVGHTARNCRAPRKKGCWRCGQEGHQMKDCTTRNNSTGVNFFRETHPLVGVQTRELCAEHPREREGSGAGDSTDTSGANCPTTGDDDERRVLPQVNLWQRPMMTVKVQGQVCQALLDTGADDSVFCNIKLKGQWTPKTIGGIGGFVPVSEYYNIPVQIGNKEVRATVLVGETPINIIGRNILKQLGCTLNFPISPIEVVKVQLKEGMDGPKVKQWPLSKEKIEALTEICKTLEKEGKISAVGPENPYNTPIFAIKKKDTSKWRKLVDFRELNKRTQDFWELQLGIPHPAGLRKRNMVTVLDVGDAYFSIPLDPDFRKYTAFTIPSLNNNTPGKRFQYNVLPQGWKGSPAIFQSSMTKILDPFRKEHPDVDIYQYMDDLYIGSDLNEEEHRKLIKKLRQHLLTWGLETPDKKYQEKPPFMWMGYELHPNKWTVQNITLPEPEQWTVNHIQKLVGKLNWASQIYHGIKTKELCKLIRGVKGLTEPVEMTREAELELEENKQILKEKVQGAYYDPKLPLQAAIQKQGQGQWTYQIYQEEGKNLKTGKYAKSPGTHTNEIRQLAGLIQKIGNESIIIWGIVPKFLLPVSKETWSQWWTDYWQVTWVPEWEFINTPPLIRLWYNLLSDPIPEAETFYVDGAANRDSKKGRAGYVTNRGRYRSKDLENTTNQQAELWAVDLALKDSGAQVNIVTDSQYVMGVLQGLPDQSDSPIVEQIIQKLTQKTAIYLAWVPAHKGIGGNEEVDKLVSKNIRKILFLDGINEAQEDHDKYHSNWKALADEYNLPPVVAKEIIAQCPKCHIKGEAIHGQVDYSPEIWQIDCTHLEGKVIIVAVHVASGFIEAEVIPEETGRETAYFILKLAGRWPVKKIHTDNGPNFTSTAVKAACWWAQIQHEFGIPYNPQSQGVVESMNKQLKQIIEQVRDQAEQLRTAVIMAVYIHNFKRKGGIGEYTAGERLLDILTTNIQTKQLQKQILKVQNFRVYYRDARDPIWKGPARLLWKGEGAVVIKEGEDIKVVPRRKAKIIKEYGKQMAGAGGMDDRQNET</sequence>
<protein>
    <recommendedName>
        <fullName>Gag-Pol polyprotein</fullName>
    </recommendedName>
    <alternativeName>
        <fullName>Pr160Gag-Pol</fullName>
    </alternativeName>
    <component>
        <recommendedName>
            <fullName>Matrix protein p17</fullName>
            <shortName>MA</shortName>
        </recommendedName>
    </component>
    <component>
        <recommendedName>
            <fullName>Capsid protein p24</fullName>
            <shortName>CA</shortName>
        </recommendedName>
    </component>
    <component>
        <recommendedName>
            <fullName>Nucleocapsid protein p7</fullName>
            <shortName>NC</shortName>
        </recommendedName>
    </component>
    <component>
        <recommendedName>
            <fullName>p6-pol</fullName>
            <shortName>p6*</shortName>
        </recommendedName>
    </component>
    <component>
        <recommendedName>
            <fullName>Protease</fullName>
            <ecNumber>3.4.23.16</ecNumber>
        </recommendedName>
        <alternativeName>
            <fullName>PR</fullName>
        </alternativeName>
        <alternativeName>
            <fullName>Retropepsin</fullName>
        </alternativeName>
    </component>
    <component>
        <recommendedName>
            <fullName>Reverse transcriptase/ribonuclease H</fullName>
            <ecNumber>2.7.7.49</ecNumber>
            <ecNumber>2.7.7.7</ecNumber>
            <ecNumber>3.1.26.13</ecNumber>
        </recommendedName>
        <alternativeName>
            <fullName>Exoribonuclease H</fullName>
            <ecNumber>3.1.13.2</ecNumber>
        </alternativeName>
        <alternativeName>
            <fullName>p66 RT</fullName>
        </alternativeName>
    </component>
    <component>
        <recommendedName>
            <fullName>p51 RT</fullName>
        </recommendedName>
    </component>
    <component>
        <recommendedName>
            <fullName>p15</fullName>
        </recommendedName>
    </component>
    <component>
        <recommendedName>
            <fullName>Integrase</fullName>
            <shortName>IN</shortName>
            <ecNumber evidence="4">2.7.7.-</ecNumber>
            <ecNumber evidence="4">3.1.-.-</ecNumber>
        </recommendedName>
    </component>
</protein>
<accession>Q8AII1</accession>
<keyword id="KW-0064">Aspartyl protease</keyword>
<keyword id="KW-0167">Capsid protein</keyword>
<keyword id="KW-0229">DNA integration</keyword>
<keyword id="KW-0233">DNA recombination</keyword>
<keyword id="KW-0238">DNA-binding</keyword>
<keyword id="KW-0239">DNA-directed DNA polymerase</keyword>
<keyword id="KW-0255">Endonuclease</keyword>
<keyword id="KW-1262">Eukaryotic host gene expression shutoff by virus</keyword>
<keyword id="KW-1193">Eukaryotic host translation shutoff by virus</keyword>
<keyword id="KW-1032">Host cell membrane</keyword>
<keyword id="KW-1035">Host cytoplasm</keyword>
<keyword id="KW-1190">Host gene expression shutoff by virus</keyword>
<keyword id="KW-1043">Host membrane</keyword>
<keyword id="KW-1048">Host nucleus</keyword>
<keyword id="KW-0945">Host-virus interaction</keyword>
<keyword id="KW-0378">Hydrolase</keyword>
<keyword id="KW-0449">Lipoprotein</keyword>
<keyword id="KW-0460">Magnesium</keyword>
<keyword id="KW-0472">Membrane</keyword>
<keyword id="KW-0479">Metal-binding</keyword>
<keyword id="KW-0511">Multifunctional enzyme</keyword>
<keyword id="KW-0519">Myristate</keyword>
<keyword id="KW-0540">Nuclease</keyword>
<keyword id="KW-0548">Nucleotidyltransferase</keyword>
<keyword id="KW-0597">Phosphoprotein</keyword>
<keyword id="KW-0645">Protease</keyword>
<keyword id="KW-1185">Reference proteome</keyword>
<keyword id="KW-0677">Repeat</keyword>
<keyword id="KW-0688">Ribosomal frameshifting</keyword>
<keyword id="KW-0694">RNA-binding</keyword>
<keyword id="KW-0695">RNA-directed DNA polymerase</keyword>
<keyword id="KW-0808">Transferase</keyword>
<keyword id="KW-1179">Viral genome integration</keyword>
<keyword id="KW-0543">Viral nucleoprotein</keyword>
<keyword id="KW-1163">Viral penetration into host nucleus</keyword>
<keyword id="KW-1188">Viral release from host cell</keyword>
<keyword id="KW-0946">Virion</keyword>
<keyword id="KW-0917">Virion maturation</keyword>
<keyword id="KW-1160">Virus entry into host cell</keyword>
<keyword id="KW-0862">Zinc</keyword>
<keyword id="KW-0863">Zinc-finger</keyword>
<organism>
    <name type="scientific">Simian immunodeficiency virus (isolate TAN1)</name>
    <name type="common">SIV-cpz</name>
    <name type="synonym">Chimpanzee immunodeficiency virus</name>
    <dbReference type="NCBI Taxonomy" id="388910"/>
    <lineage>
        <taxon>Viruses</taxon>
        <taxon>Riboviria</taxon>
        <taxon>Pararnavirae</taxon>
        <taxon>Artverviricota</taxon>
        <taxon>Revtraviricetes</taxon>
        <taxon>Ortervirales</taxon>
        <taxon>Retroviridae</taxon>
        <taxon>Orthoretrovirinae</taxon>
        <taxon>Lentivirus</taxon>
        <taxon>Simian immunodeficiency virus</taxon>
    </lineage>
</organism>
<feature type="initiator methionine" description="Removed; by host" evidence="1">
    <location>
        <position position="1"/>
    </location>
</feature>
<feature type="chain" id="PRO_0000261304" description="Gag-Pol polyprotein">
    <location>
        <begin position="2"/>
        <end position="1462"/>
    </location>
</feature>
<feature type="chain" id="PRO_0000249395" description="Matrix protein p17" evidence="1">
    <location>
        <begin position="2"/>
        <end position="155"/>
    </location>
</feature>
<feature type="chain" id="PRO_0000249396" description="Capsid protein p24" evidence="1">
    <location>
        <begin position="156"/>
        <end position="389"/>
    </location>
</feature>
<feature type="chain" id="PRO_0000249398" description="Nucleocapsid protein p7" evidence="1">
    <location>
        <begin position="390"/>
        <end position="463"/>
    </location>
</feature>
<feature type="chain" id="PRO_0000249400" description="p6-pol" evidence="8">
    <location>
        <begin position="464"/>
        <end position="515"/>
    </location>
</feature>
<feature type="chain" id="PRO_0000249401" description="Protease" evidence="1">
    <location>
        <begin position="516"/>
        <end position="614"/>
    </location>
</feature>
<feature type="chain" id="PRO_0000249402" description="Reverse transcriptase/ribonuclease H" evidence="1">
    <location>
        <begin position="615"/>
        <end position="1174"/>
    </location>
</feature>
<feature type="chain" id="PRO_0000249403" description="p51 RT" evidence="1">
    <location>
        <begin position="615"/>
        <end position="1054"/>
    </location>
</feature>
<feature type="chain" id="PRO_0000249404" description="p15" evidence="1">
    <location>
        <begin position="1055"/>
        <end position="1174"/>
    </location>
</feature>
<feature type="chain" id="PRO_0000249405" description="Integrase" evidence="1">
    <location>
        <begin position="1175"/>
        <end position="1462"/>
    </location>
</feature>
<feature type="domain" description="Peptidase A2" evidence="10">
    <location>
        <begin position="535"/>
        <end position="604"/>
    </location>
</feature>
<feature type="domain" description="Reverse transcriptase" evidence="11">
    <location>
        <begin position="658"/>
        <end position="848"/>
    </location>
</feature>
<feature type="domain" description="RNase H type-1" evidence="12">
    <location>
        <begin position="1048"/>
        <end position="1171"/>
    </location>
</feature>
<feature type="domain" description="Integrase catalytic" evidence="14">
    <location>
        <begin position="1228"/>
        <end position="1378"/>
    </location>
</feature>
<feature type="zinc finger region" description="CCHC-type 1" evidence="9">
    <location>
        <begin position="417"/>
        <end position="434"/>
    </location>
</feature>
<feature type="zinc finger region" description="CCHC-type 2" evidence="9">
    <location>
        <begin position="438"/>
        <end position="455"/>
    </location>
</feature>
<feature type="zinc finger region" description="Integrase-type" evidence="13">
    <location>
        <begin position="1177"/>
        <end position="1218"/>
    </location>
</feature>
<feature type="DNA-binding region" description="Integrase-type" evidence="15">
    <location>
        <begin position="1397"/>
        <end position="1444"/>
    </location>
</feature>
<feature type="region of interest" description="Disordered" evidence="17">
    <location>
        <begin position="113"/>
        <end position="153"/>
    </location>
</feature>
<feature type="region of interest" description="Disordered" evidence="17">
    <location>
        <begin position="482"/>
        <end position="513"/>
    </location>
</feature>
<feature type="region of interest" description="RT 'primer grip'" evidence="1">
    <location>
        <begin position="841"/>
        <end position="849"/>
    </location>
</feature>
<feature type="short sequence motif" description="Nuclear export signal" evidence="1">
    <location>
        <begin position="16"/>
        <end position="22"/>
    </location>
</feature>
<feature type="short sequence motif" description="Nuclear localization signal" evidence="1">
    <location>
        <begin position="26"/>
        <end position="32"/>
    </location>
</feature>
<feature type="short sequence motif" description="Tryptophan repeat motif" evidence="1">
    <location>
        <begin position="1012"/>
        <end position="1028"/>
    </location>
</feature>
<feature type="compositionally biased region" description="Polar residues" evidence="17">
    <location>
        <begin position="113"/>
        <end position="125"/>
    </location>
</feature>
<feature type="compositionally biased region" description="Polar residues" evidence="17">
    <location>
        <begin position="135"/>
        <end position="151"/>
    </location>
</feature>
<feature type="active site" description="For protease activity; shared with dimeric partner" evidence="16">
    <location>
        <position position="540"/>
    </location>
</feature>
<feature type="binding site" evidence="1">
    <location>
        <position position="724"/>
    </location>
    <ligand>
        <name>Mg(2+)</name>
        <dbReference type="ChEBI" id="CHEBI:18420"/>
        <label>1</label>
        <note>catalytic; for reverse transcriptase activity</note>
    </ligand>
</feature>
<feature type="binding site" evidence="1">
    <location>
        <position position="799"/>
    </location>
    <ligand>
        <name>Mg(2+)</name>
        <dbReference type="ChEBI" id="CHEBI:18420"/>
        <label>1</label>
        <note>catalytic; for reverse transcriptase activity</note>
    </ligand>
</feature>
<feature type="binding site" evidence="1">
    <location>
        <position position="800"/>
    </location>
    <ligand>
        <name>Mg(2+)</name>
        <dbReference type="ChEBI" id="CHEBI:18420"/>
        <label>1</label>
        <note>catalytic; for reverse transcriptase activity</note>
    </ligand>
</feature>
<feature type="binding site" evidence="1">
    <location>
        <position position="1057"/>
    </location>
    <ligand>
        <name>Mg(2+)</name>
        <dbReference type="ChEBI" id="CHEBI:18420"/>
        <label>2</label>
        <note>catalytic; for RNase H activity</note>
    </ligand>
</feature>
<feature type="binding site" evidence="1">
    <location>
        <position position="1092"/>
    </location>
    <ligand>
        <name>Mg(2+)</name>
        <dbReference type="ChEBI" id="CHEBI:18420"/>
        <label>2</label>
        <note>catalytic; for RNase H activity</note>
    </ligand>
</feature>
<feature type="binding site" evidence="1">
    <location>
        <position position="1112"/>
    </location>
    <ligand>
        <name>Mg(2+)</name>
        <dbReference type="ChEBI" id="CHEBI:18420"/>
        <label>2</label>
        <note>catalytic; for RNase H activity</note>
    </ligand>
</feature>
<feature type="binding site" evidence="1">
    <location>
        <position position="1163"/>
    </location>
    <ligand>
        <name>Mg(2+)</name>
        <dbReference type="ChEBI" id="CHEBI:18420"/>
        <label>2</label>
        <note>catalytic; for RNase H activity</note>
    </ligand>
</feature>
<feature type="binding site" evidence="13">
    <location>
        <position position="1186"/>
    </location>
    <ligand>
        <name>Zn(2+)</name>
        <dbReference type="ChEBI" id="CHEBI:29105"/>
    </ligand>
</feature>
<feature type="binding site" evidence="13">
    <location>
        <position position="1190"/>
    </location>
    <ligand>
        <name>Zn(2+)</name>
        <dbReference type="ChEBI" id="CHEBI:29105"/>
    </ligand>
</feature>
<feature type="binding site" evidence="13">
    <location>
        <position position="1214"/>
    </location>
    <ligand>
        <name>Zn(2+)</name>
        <dbReference type="ChEBI" id="CHEBI:29105"/>
    </ligand>
</feature>
<feature type="binding site" evidence="13">
    <location>
        <position position="1217"/>
    </location>
    <ligand>
        <name>Zn(2+)</name>
        <dbReference type="ChEBI" id="CHEBI:29105"/>
    </ligand>
</feature>
<feature type="binding site" evidence="1">
    <location>
        <position position="1238"/>
    </location>
    <ligand>
        <name>Mg(2+)</name>
        <dbReference type="ChEBI" id="CHEBI:18420"/>
        <label>3</label>
        <note>catalytic; for integrase activity</note>
    </ligand>
</feature>
<feature type="binding site" evidence="1">
    <location>
        <position position="1290"/>
    </location>
    <ligand>
        <name>Mg(2+)</name>
        <dbReference type="ChEBI" id="CHEBI:18420"/>
        <label>3</label>
        <note>catalytic; for integrase activity</note>
    </ligand>
</feature>
<feature type="site" description="Cleavage; by viral protease" evidence="1">
    <location>
        <begin position="155"/>
        <end position="156"/>
    </location>
</feature>
<feature type="site" description="Cis/trans isomerization of proline peptide bond; by human PPIA/CYPA" evidence="1">
    <location>
        <begin position="244"/>
        <end position="245"/>
    </location>
</feature>
<feature type="site" description="Cleavage; by viral protease" evidence="1">
    <location>
        <begin position="389"/>
        <end position="390"/>
    </location>
</feature>
<feature type="site" description="Cleavage; by viral protease" evidence="1">
    <location>
        <begin position="463"/>
        <end position="464"/>
    </location>
</feature>
<feature type="site" description="Cleavage; by viral protease" evidence="1">
    <location>
        <begin position="515"/>
        <end position="516"/>
    </location>
</feature>
<feature type="site" description="Cleavage; by viral protease" evidence="1">
    <location>
        <begin position="614"/>
        <end position="615"/>
    </location>
</feature>
<feature type="site" description="Essential for RT p66/p51 heterodimerization" evidence="1">
    <location>
        <position position="1015"/>
    </location>
</feature>
<feature type="site" description="Essential for RT p66/p51 heterodimerization" evidence="1">
    <location>
        <position position="1028"/>
    </location>
</feature>
<feature type="site" description="Cleavage; by viral protease; partial" evidence="1">
    <location>
        <begin position="1054"/>
        <end position="1055"/>
    </location>
</feature>
<feature type="site" description="Cleavage; by viral protease" evidence="1">
    <location>
        <begin position="1174"/>
        <end position="1175"/>
    </location>
</feature>
<feature type="modified residue" description="Phosphotyrosine; by host" evidence="1">
    <location>
        <position position="155"/>
    </location>
</feature>
<feature type="lipid moiety-binding region" description="N-myristoyl glycine; by host" evidence="1">
    <location>
        <position position="2"/>
    </location>
</feature>
<organismHost>
    <name type="scientific">Pan troglodytes</name>
    <name type="common">Chimpanzee</name>
    <dbReference type="NCBI Taxonomy" id="9598"/>
</organismHost>
<comment type="function">
    <text evidence="1">Gag-Pol polyprotein and Gag polyprotein may regulate their own translation, by the binding genomic RNA in the 5'-UTR. At low concentration, Gag-Pol and Gag would promote translation, whereas at high concentration, the polyproteins encapsidate genomic RNA and then shut off translation (By similarity).</text>
</comment>
<comment type="function">
    <text evidence="1">Matrix protein p17 has two main functions: in infected cell, it targets Gag and Gag-pol polyproteins to the plasma membrane via a multipartite membrane-binding signal, that includes its myristointegration complex. The myristoylation signal and the NLS exert conflicting influences its subcellular localization. The key regulation of these motifs might be phosphorylation of a portion of MA molecules on the C-terminal tyrosine at the time of virus maturation, by virion-associated cellular tyrosine kinase. Implicated in the release from host cell mediated by Vpu (By similarity).</text>
</comment>
<comment type="function">
    <text evidence="1">Capsid protein p24 forms the conical core that encapsulates the genomic RNA-nucleocapsid complex in the virion. The core is constituted by capsid protein hexamer subunits. The core is disassembled soon after virion entry. Interaction with host PPIA/CYPA protects the virus from restriction by host TRIM5-alpha and from an unknown antiviral activity in host cells. This capsid restriction by TRIM5 is one of the factors which restricts SIV to the simian species (By similarity).</text>
</comment>
<comment type="function">
    <text evidence="1">Nucleocapsid protein p7 encapsulates and protects viral dimeric unspliced (genomic) RNA. Binds these RNAs through its zinc fingers. Facilitates rearangement of nucleic acid secondary structure during retrotranscription of genomic RNA. This capability is referred to as nucleic acid chaperone activity (By similarity).</text>
</comment>
<comment type="function">
    <text evidence="10">The aspartyl protease mediates proteolytic cleavages of Gag and Gag-Pol polyproteins during or shortly after the release of the virion from the plasma membrane. Cleavages take place as an ordered, step-wise cascade to yield mature proteins. This process is called maturation. Displays maximal activity during the budding process just prior to particle release from the cell. Also cleaves Nef and Vif, probably concomitantly with viral structural proteins on maturation of virus particles. Hydrolyzes host EIF4GI and PABP1 in order to shut off the capped cellular mRNA translation. The resulting inhibition of cellular protein synthesis serves to ensure maximal viral gene expression and to evade host immune response (By similarity).</text>
</comment>
<comment type="function">
    <text evidence="1">Reverse transcriptase/ribonuclease H (RT) is a multifunctional enzyme that converts the viral dimeric RNA genome into dsDNA in the cytoplasm, shortly after virus entry into the cell. This enzyme displays a DNA polymerase activity that can copy either DNA or RNA templates, and a ribonuclease H (RNase H) activity that cleaves the RNA strand of RNA-DNA heteroduplexes in a partially processive 3' to 5' endonucleasic mode. Conversion of viral genomic RNA into dsDNA requires many steps. A tRNA binds to the primer-binding site (PBS) situated at the 5'-end of the viral RNA. RT uses the 3' end of the tRNA primer to perform a short round of RNA-dependent minus-strand DNA synthesis. The reading proceeds through the U5 region and ends after the repeated (R) region which is present at both ends of viral RNA. The portion of the RNA-DNA heteroduplex is digested by the RNase H, resulting in a ssDNA product attached to the tRNA primer. This ssDNA/tRNA hybridizes with the identical R region situated at the 3' end of viral RNA. This template exchange, known as minus-strand DNA strong stop transfer, can be either intra- or intermolecular. RT uses the 3' end of this newly synthesized short ssDNA to perform the RNA-dependent minus-strand DNA synthesis of the whole template. RNase H digests the RNA template except for two polypurine tracts (PPTs) situated at the 5'-end and near the center of the genome. It is not clear if both polymerase and RNase H activities are simultaneous. RNase H can probably proceed both in a polymerase-dependent (RNA cut into small fragments by the same RT performing DNA synthesis) and a polymerase-independent mode (cleavage of remaining RNA fragments by free RTs). Secondly, RT performs DNA-directed plus-strand DNA synthesis using the PPTs that have not been removed by RNase H as primers. PPTs and tRNA primers are then removed by RNase H. The 3' and 5' ssDNA PBS regions hybridize to form a circular dsDNA intermediate. Strand displacement synthesis by RT to the PBS and PPT ends produces a blunt ended, linear dsDNA copy of the viral genome that includes long terminal repeats (LTRs) at both ends (By similarity).</text>
</comment>
<comment type="function">
    <text evidence="1">Integrase catalyzes viral DNA integration into the host chromosome, by performing a series of DNA cutting and joining reactions. This enzyme activity takes place after virion entry into a cell and reverse transcription of the RNA genome in dsDNA. The first step in the integration process is 3' processing. This step requires a complex comprising the viral genome, matrix protein, Vpr and integrase. This complex is called the pre-integration complex (PIC). The integrase protein removes 2 nucleotides from each 3' end of the viral DNA, leaving recessed CA OH's at the 3' ends. In the second step, the PIC enters cell nucleus. This process is mediated through integrase and Vpr proteins, and allows the virus to infect a non dividing cell. This ability to enter the nucleus is specific of lentiviruses, other retroviruses cannot and rely on cell division to access cell chromosomes. In the third step, termed strand transfer, the integrase protein joins the previously processed 3' ends to the 5' ends of strands of target cellular DNA at the site of integration. The 5'-ends are produced by integrase-catalyzed staggered cuts, 5 bp apart. A Y-shaped, gapped, recombination intermediate results, with the 5'-ends of the viral DNA strands and the 3' ends of target DNA strands remaining unjoined, flanking a gap of 5 bp. The last step is viral DNA integration into host chromosome. This involves host DNA repair synthesis in which the 5 bp gaps between the unjoined strands are filled in and then ligated. Since this process occurs at both cuts flanking the SIV genome, a 5 bp duplication of host DNA is produced at the ends of SIV integration. Alternatively, Integrase may catalyze the excision of viral DNA just after strand transfer, this is termed disintegration (By similarity).</text>
</comment>
<comment type="catalytic activity">
    <reaction evidence="10">
        <text>Specific for a P1 residue that is hydrophobic, and P1' variable, but often Pro.</text>
        <dbReference type="EC" id="3.4.23.16"/>
    </reaction>
</comment>
<comment type="catalytic activity">
    <reaction>
        <text>Endohydrolysis of RNA in RNA/DNA hybrids. Three different cleavage modes: 1. sequence-specific internal cleavage of RNA. Human immunodeficiency virus type 1 and Moloney murine leukemia virus enzymes prefer to cleave the RNA strand one nucleotide away from the RNA-DNA junction. 2. RNA 5'-end directed cleavage 13-19 nucleotides from the RNA end. 3. DNA 3'-end directed cleavage 15-20 nucleotides away from the primer terminus.</text>
        <dbReference type="EC" id="3.1.26.13"/>
    </reaction>
</comment>
<comment type="catalytic activity">
    <reaction>
        <text>3'-end directed exonucleolytic cleavage of viral RNA-DNA hybrid.</text>
        <dbReference type="EC" id="3.1.13.2"/>
    </reaction>
</comment>
<comment type="catalytic activity">
    <reaction evidence="11">
        <text>DNA(n) + a 2'-deoxyribonucleoside 5'-triphosphate = DNA(n+1) + diphosphate</text>
        <dbReference type="Rhea" id="RHEA:22508"/>
        <dbReference type="Rhea" id="RHEA-COMP:17339"/>
        <dbReference type="Rhea" id="RHEA-COMP:17340"/>
        <dbReference type="ChEBI" id="CHEBI:33019"/>
        <dbReference type="ChEBI" id="CHEBI:61560"/>
        <dbReference type="ChEBI" id="CHEBI:173112"/>
        <dbReference type="EC" id="2.7.7.49"/>
    </reaction>
</comment>
<comment type="catalytic activity">
    <reaction evidence="11">
        <text>DNA(n) + a 2'-deoxyribonucleoside 5'-triphosphate = DNA(n+1) + diphosphate</text>
        <dbReference type="Rhea" id="RHEA:22508"/>
        <dbReference type="Rhea" id="RHEA-COMP:17339"/>
        <dbReference type="Rhea" id="RHEA-COMP:17340"/>
        <dbReference type="ChEBI" id="CHEBI:33019"/>
        <dbReference type="ChEBI" id="CHEBI:61560"/>
        <dbReference type="ChEBI" id="CHEBI:173112"/>
        <dbReference type="EC" id="2.7.7.7"/>
    </reaction>
</comment>
<comment type="cofactor">
    <cofactor evidence="1">
        <name>Mg(2+)</name>
        <dbReference type="ChEBI" id="CHEBI:18420"/>
    </cofactor>
    <text evidence="1">Binds 2 magnesium ions for reverse transcriptase polymerase activity.</text>
</comment>
<comment type="cofactor">
    <cofactor evidence="1">
        <name>Mg(2+)</name>
        <dbReference type="ChEBI" id="CHEBI:18420"/>
    </cofactor>
    <text evidence="1">Binds 2 magnesium ions for ribonuclease H (RNase H) activity. Substrate-binding is a precondition for magnesium binding.</text>
</comment>
<comment type="cofactor">
    <cofactor evidence="1">
        <name>Mg(2+)</name>
        <dbReference type="ChEBI" id="CHEBI:18420"/>
    </cofactor>
    <text evidence="1">Magnesium ions are required for integrase activity. Binds at least 1, maybe 2 magnesium ions.</text>
</comment>
<comment type="activity regulation">
    <text>The viral protease is inhibited by many synthetic protease inhibitors (PIs), such as amprenavir, atazanavir, indinavir, loprinavir, nelfinavir, ritonavir and saquinavir. RT can be inhibited either by nucleoside RT inhibitors (NRTIs) or by non nucleoside RT inhibitors (NNRTIs). NRTIs act as chain terminators, whereas NNRTIs inhibit DNA polymerization by binding a small hydrophobic pocket near the RT active site and inducing an allosteric change in this region. Classical NRTIs are abacavir, adefovir (PMEA), didanosine (ddI), lamivudine (3TC), stavudine (d4T), tenofovir (PMPA), zalcitabine (ddC), and zidovudine (AZT). Classical NNRTIs are atevirdine (BHAP U-87201E), delavirdine, efavirenz (DMP-266), emivirine (I-EBU), and nevirapine (BI-RG-587). The tritherapies used as a basic effective treatment of AIDS associate two NRTIs and one NNRTI. Use of protease inhibitors in tritherapy regimens permit more ambitious therapeutic strategies.</text>
</comment>
<comment type="subunit">
    <molecule>Matrix protein p17</molecule>
    <text evidence="5 6">Homotrimer. Interacts with gp41 (via C-terminus).</text>
</comment>
<comment type="subunit">
    <molecule>Protease</molecule>
    <text evidence="4 7">Homodimer. The active site consists of two apposed aspartic acid residues.</text>
</comment>
<comment type="subunit">
    <molecule>Reverse transcriptase/ribonuclease H</molecule>
    <text evidence="2">Heterodimer of p66 RT and p51 RT (RT p66/p51). Heterodimerization of RT is essential for DNA polymerase activity. Despite the sequence identities, p66 RT and p51 RT have distinct folding.</text>
</comment>
<comment type="subunit">
    <molecule>Integrase</molecule>
    <text evidence="3">Homotetramer; may further associate as a homohexadecamer (By similarity).</text>
</comment>
<comment type="subcellular location">
    <molecule>Matrix protein p17</molecule>
    <subcellularLocation>
        <location evidence="18">Virion</location>
    </subcellularLocation>
    <subcellularLocation>
        <location evidence="1">Host nucleus</location>
    </subcellularLocation>
    <subcellularLocation>
        <location evidence="1">Host cytoplasm</location>
    </subcellularLocation>
    <subcellularLocation>
        <location evidence="18">Host cell membrane</location>
        <topology evidence="18">Lipid-anchor</topology>
    </subcellularLocation>
    <text evidence="1">Following virus entry, the nuclear localization signal (NLS) of the matrix protein participates with Vpr to the nuclear localization of the viral genome. During virus production, the nuclear export activity of the matrix protein counteracts the NLS to maintain the Gag and Gag-Pol polyproteins in the cytoplasm, thereby directing unspliced RNA to the plasma membrane (By similarity).</text>
</comment>
<comment type="subcellular location">
    <molecule>Capsid protein p24</molecule>
    <subcellularLocation>
        <location evidence="18">Virion</location>
    </subcellularLocation>
</comment>
<comment type="subcellular location">
    <molecule>Nucleocapsid protein p7</molecule>
    <subcellularLocation>
        <location evidence="18">Virion</location>
    </subcellularLocation>
</comment>
<comment type="subcellular location">
    <molecule>Reverse transcriptase/ribonuclease H</molecule>
    <subcellularLocation>
        <location evidence="18">Virion</location>
    </subcellularLocation>
</comment>
<comment type="subcellular location">
    <molecule>Integrase</molecule>
    <subcellularLocation>
        <location evidence="18">Virion</location>
    </subcellularLocation>
    <subcellularLocation>
        <location evidence="18">Host nucleus</location>
    </subcellularLocation>
    <subcellularLocation>
        <location evidence="18">Host cytoplasm</location>
    </subcellularLocation>
    <text evidence="18">Nuclear at initial phase, cytoplasmic at assembly.</text>
</comment>
<comment type="alternative products">
    <event type="ribosomal frameshifting"/>
    <isoform>
        <id>Q8AII1-1</id>
        <name>Gag-Pol polyprotein</name>
        <sequence type="displayed"/>
    </isoform>
    <isoform>
        <id>Q8AII2-1</id>
        <name>Gag polyprotein</name>
        <sequence type="external"/>
    </isoform>
    <text>Translation results in the formation of the Gag polyprotein most of the time. Ribosomal frameshifting at the gag-pol genes boundary occurs at low frequency and produces the Gag-Pol polyprotein. This strategy of translation probably allows the virus to modulate the quantity of each viral protein. Maintenance of a correct Gag to Gag-Pol ratio is essential for RNA dimerization and viral infectivity.</text>
</comment>
<comment type="domain">
    <text evidence="1">The p66 RT is structured in five subdomains: finger, palm, thumb, connection and RNase H. Within the palm subdomain, the 'primer grip' region is thought to be involved in the positioning of the primer terminus for accommodating the incoming nucleotide. The RNase H domain stabilizes the association of RT with primer-template (By similarity).</text>
</comment>
<comment type="domain">
    <text evidence="1">The tryptophan repeat motif is involved in RT p66/p51 dimerization.</text>
</comment>
<comment type="PTM">
    <text evidence="11">Specific enzymatic cleavages by the viral protease yield mature proteins. The protease is released by autocatalytic cleavage. The polyprotein is cleaved during and after budding, this process is termed maturation. Proteolytic cleavage of p66 RT removes the RNase H domain to yield the p51 RT subunit.</text>
</comment>
<comment type="PTM">
    <text>Capsid protein p24 is phosphorylated.</text>
</comment>
<comment type="miscellaneous">
    <text>The reverse transcriptase is an error-prone enzyme that lacks a proof-reading function. High mutations rate is a direct consequence of this characteristic. RT also displays frequent template switching leading to high recombination rate. Recombination mostly occurs between homologous regions of the two copackaged RNA genomes. If these two RNA molecules derive from different viral strains, reverse transcription will give rise to highly recombinated proviral DNAs.</text>
</comment>
<comment type="miscellaneous">
    <molecule>Isoform Gag-Pol polyprotein</molecule>
    <text>Produced by -1 ribosomal frameshifting.</text>
</comment>
<gene>
    <name type="primary">gag-pol</name>
</gene>
<reference key="1">
    <citation type="journal article" date="2003" name="J. Virol.">
        <title>Amplification of a complete simian immunodeficiency virus genome from fecal RNA of a wild chimpanzee.</title>
        <authorList>
            <person name="Santiago M.L."/>
            <person name="Bibollet-Ruche F."/>
            <person name="Bailes E."/>
            <person name="Kamenya S."/>
            <person name="Muller M.N."/>
            <person name="Lukasik M."/>
            <person name="Pusey A.E."/>
            <person name="Collins D.A."/>
            <person name="Wrangham R.W."/>
            <person name="Goodall J."/>
            <person name="Shaw G.M."/>
            <person name="Sharp P.M."/>
            <person name="Hahn B.H."/>
        </authorList>
    </citation>
    <scope>NUCLEOTIDE SEQUENCE [GENOMIC RNA]</scope>
</reference>